<reference key="1">
    <citation type="journal article" date="1994" name="Photosyn. Res.">
        <title>Genes encoding two chlorosome components from the green sulfur bacteria Chlorobium vibrioforme strain 8327D and Chlorobium tepidum.</title>
        <authorList>
            <person name="Chung S."/>
            <person name="Frank G."/>
            <person name="Zuber H."/>
            <person name="Bryant D.A."/>
        </authorList>
    </citation>
    <scope>NUCLEOTIDE SEQUENCE [GENOMIC DNA]</scope>
    <source>
        <strain>8327D</strain>
    </source>
</reference>
<accession>Q46465</accession>
<organism>
    <name type="scientific">Prosthecochloris vibrioformis</name>
    <name type="common">Chlorobium vibrioforme</name>
    <dbReference type="NCBI Taxonomy" id="1098"/>
    <lineage>
        <taxon>Bacteria</taxon>
        <taxon>Pseudomonadati</taxon>
        <taxon>Chlorobiota</taxon>
        <taxon>Chlorobiia</taxon>
        <taxon>Chlorobiales</taxon>
        <taxon>Chlorobiaceae</taxon>
        <taxon>Prosthecochloris</taxon>
    </lineage>
</organism>
<sequence>MRILTFTGKGGVGKTSVSAATAVRLSEMGHRTLVLSTDPAHSLSDSFNLQLGAEPTKIKENLHAIEVNPYVDLKENWHSVQKYYTRVFMAQGVSGVMADEMTILPGMEELFSLLRIKRYKSTGLYDALVLDTAPTGETLRLLSLPDTLSWGMKAVKNVNKYIVRPLSKPLSKMSDKIAYYIPPEDAIESVDQVFDELEDIRDILTDNVKSTVRLVMNAEKMSIKETMRALTYLNLYGFKVDMVLVNKLLDAQENSGYLEKWKGIQQKYLGEIEEGFSPLPVKKLKMYDQEIVGVKSLEVFAHDIYGDTDPSDMMYDEPPIKFVRKGDIYEVQLKLMFANPVDIDVWVTGDELFVQIGNQRKIITLPVSLTGLEPGDAVFRDKWLHIPFDLEKQGQHHRTREFNKA</sequence>
<feature type="chain" id="PRO_0000152263" description="Putative arsenical pump-driving ATPase">
    <location>
        <begin position="1"/>
        <end position="405"/>
    </location>
</feature>
<feature type="binding site" evidence="2">
    <location>
        <begin position="8"/>
        <end position="15"/>
    </location>
    <ligand>
        <name>ATP</name>
        <dbReference type="ChEBI" id="CHEBI:30616"/>
    </ligand>
</feature>
<keyword id="KW-0059">Arsenical resistance</keyword>
<keyword id="KW-0067">ATP-binding</keyword>
<keyword id="KW-0547">Nucleotide-binding</keyword>
<keyword id="KW-1278">Translocase</keyword>
<proteinExistence type="inferred from homology"/>
<comment type="function">
    <text evidence="1">Anion-transporting ATPase. Catalyzes the extrusion of arsenite (By similarity).</text>
</comment>
<comment type="catalytic activity">
    <reaction>
        <text>arsenite(in) + ATP + H2O = arsenite(out) + ADP + phosphate + H(+)</text>
        <dbReference type="Rhea" id="RHEA:11348"/>
        <dbReference type="ChEBI" id="CHEBI:15377"/>
        <dbReference type="ChEBI" id="CHEBI:15378"/>
        <dbReference type="ChEBI" id="CHEBI:29242"/>
        <dbReference type="ChEBI" id="CHEBI:30616"/>
        <dbReference type="ChEBI" id="CHEBI:43474"/>
        <dbReference type="ChEBI" id="CHEBI:456216"/>
        <dbReference type="EC" id="7.3.2.7"/>
    </reaction>
</comment>
<comment type="similarity">
    <text evidence="3">Belongs to the arsA ATPase family.</text>
</comment>
<protein>
    <recommendedName>
        <fullName>Putative arsenical pump-driving ATPase</fullName>
        <ecNumber>7.3.2.7</ecNumber>
    </recommendedName>
    <alternativeName>
        <fullName>Arsenical resistance ATPase</fullName>
    </alternativeName>
    <alternativeName>
        <fullName>Arsenite-translocating ATPase</fullName>
    </alternativeName>
    <alternativeName>
        <fullName>Arsenite-transporting ATPase</fullName>
    </alternativeName>
</protein>
<evidence type="ECO:0000250" key="1"/>
<evidence type="ECO:0000255" key="2"/>
<evidence type="ECO:0000305" key="3"/>
<dbReference type="EC" id="7.3.2.7"/>
<dbReference type="EMBL" id="U09867">
    <property type="protein sequence ID" value="AAA18794.1"/>
    <property type="molecule type" value="Unassigned_DNA"/>
</dbReference>
<dbReference type="SMR" id="Q46465"/>
<dbReference type="GO" id="GO:0005524">
    <property type="term" value="F:ATP binding"/>
    <property type="evidence" value="ECO:0007669"/>
    <property type="project" value="UniProtKB-KW"/>
</dbReference>
<dbReference type="GO" id="GO:0016887">
    <property type="term" value="F:ATP hydrolysis activity"/>
    <property type="evidence" value="ECO:0007669"/>
    <property type="project" value="InterPro"/>
</dbReference>
<dbReference type="GO" id="GO:0015446">
    <property type="term" value="F:ATPase-coupled arsenite transmembrane transporter activity"/>
    <property type="evidence" value="ECO:0007669"/>
    <property type="project" value="UniProtKB-EC"/>
</dbReference>
<dbReference type="CDD" id="cd02035">
    <property type="entry name" value="ArsA"/>
    <property type="match status" value="1"/>
</dbReference>
<dbReference type="FunFam" id="3.40.50.300:FF:001801">
    <property type="entry name" value="Putative arsenical pump-driving ATPase"/>
    <property type="match status" value="1"/>
</dbReference>
<dbReference type="Gene3D" id="2.60.40.790">
    <property type="match status" value="1"/>
</dbReference>
<dbReference type="Gene3D" id="3.40.50.300">
    <property type="entry name" value="P-loop containing nucleotide triphosphate hydrolases"/>
    <property type="match status" value="1"/>
</dbReference>
<dbReference type="InterPro" id="IPR025723">
    <property type="entry name" value="Anion-transp_ATPase-like_dom"/>
</dbReference>
<dbReference type="InterPro" id="IPR040612">
    <property type="entry name" value="ArsA_HSP20-like"/>
</dbReference>
<dbReference type="InterPro" id="IPR016300">
    <property type="entry name" value="ATPase_ArsA/GET3"/>
</dbReference>
<dbReference type="InterPro" id="IPR008978">
    <property type="entry name" value="HSP20-like_chaperone"/>
</dbReference>
<dbReference type="InterPro" id="IPR027417">
    <property type="entry name" value="P-loop_NTPase"/>
</dbReference>
<dbReference type="NCBIfam" id="TIGR00345">
    <property type="entry name" value="GET3_arsA_TRC40"/>
    <property type="match status" value="1"/>
</dbReference>
<dbReference type="PANTHER" id="PTHR10803">
    <property type="entry name" value="ARSENICAL PUMP-DRIVING ATPASE ARSENITE-TRANSLOCATING ATPASE"/>
    <property type="match status" value="1"/>
</dbReference>
<dbReference type="PANTHER" id="PTHR10803:SF3">
    <property type="entry name" value="ATPASE GET3"/>
    <property type="match status" value="1"/>
</dbReference>
<dbReference type="Pfam" id="PF02374">
    <property type="entry name" value="ArsA_ATPase"/>
    <property type="match status" value="1"/>
</dbReference>
<dbReference type="Pfam" id="PF17886">
    <property type="entry name" value="ArsA_HSP20"/>
    <property type="match status" value="1"/>
</dbReference>
<dbReference type="SUPFAM" id="SSF52540">
    <property type="entry name" value="P-loop containing nucleoside triphosphate hydrolases"/>
    <property type="match status" value="1"/>
</dbReference>
<name>ARSA_PROVB</name>